<evidence type="ECO:0000256" key="1">
    <source>
        <dbReference type="SAM" id="MobiDB-lite"/>
    </source>
</evidence>
<evidence type="ECO:0000305" key="2"/>
<protein>
    <recommendedName>
        <fullName>Transcription factor SPT20 homolog</fullName>
    </recommendedName>
</protein>
<proteinExistence type="inferred from homology"/>
<gene>
    <name type="ORF">DDB_G0280065</name>
</gene>
<accession>Q54VY3</accession>
<organism>
    <name type="scientific">Dictyostelium discoideum</name>
    <name type="common">Social amoeba</name>
    <dbReference type="NCBI Taxonomy" id="44689"/>
    <lineage>
        <taxon>Eukaryota</taxon>
        <taxon>Amoebozoa</taxon>
        <taxon>Evosea</taxon>
        <taxon>Eumycetozoa</taxon>
        <taxon>Dictyostelia</taxon>
        <taxon>Dictyosteliales</taxon>
        <taxon>Dictyosteliaceae</taxon>
        <taxon>Dictyostelium</taxon>
    </lineage>
</organism>
<sequence>MNGNSKVHTEENKNEHQQEGKGGEQEQEQINKHINKDTINNNNNNNNSMSMEMDINSVSVNSLSEPTPNEQQNNNNNNNSNGNGNGNDETTSSKTTTIINSNPLDTDTIMHLNNNDSSNNTTTTTIPRQSSSSIQNGIHKEENINQLTEIQLQPSLQIMDKEQQMNGIEESTTIATQTTLPTNNNNNNNNNNNNNNNNNNNNNNILEKESNGVQEIEDSPNHLSLKRKLMILEEMGLISDDNNKNNNNNSIDIPNSNRLNQIPSSYKTSLYICLYPIGYAIDNIYKDKIFTYNDKISKDFLNSISQGKLTPYIINILDQLSEQNDQKQQQQQQQQQQQQQQQQQQQQQQQQQQQTNNIYQNSNEITYYNGCIVVNIKDYRGFAENEQIAKTFNSKNMKPYPITVPIGTFKEFIEKRIILKPTMESLLFDIKKNCSTLNNDNKNNNINNINNINNNNNNNNNNNNNNNNNININNNNNINNYLNIKESEIVNEEYLLNFEKCLLHAITPQLELSVNPNCFFDQLETKQKQLYNQSHSLFSYKRFKPSDFIGLKYPVVYNNNNNNNNNNNKSYNNISNNNNNNVSNRFIKTHSISNIQERQQVNNNDLSTISTQQSPPTLIQTSAKRSIITLNTQINTTNSCLPNDNFSLFKFLNSNPKWVNERKSMLQYHSNINQTQSFPFNYQFNNNNNNNNNIPVNNNNNNVITQPPFGNGINTFSIKPSIMTKIPIECEQLNGRLLQFFSTSNLTVLTFECKAKPTGYELLMYVSETTQVLNTLISLRNLKFTAPSTSTSSSSSSGGTTTTTTATGTTPTTPTPVPLTQQQLIQQLISFSLNKPILPLNQQSPLAEASYVLDTQLPQPTYLSFPIGNSKQAHFLINHMKSCIEHEGHYILSYDSSFPDTISSQAQEIRKKAEYIHNQQQLNQQQQLQYHLQQQKQQQQQQQQQQQQQNQQQQQQNQQQQQNQQNQQQNQQQNQQQNQQQQQQQNQQNQQNQQNQQQNQQQQQQQNQQQQQNQQTQQQQTQQQIQQNQQQPTQQIQQQNQQQIQQNQQQLQQQQLQQQQQQIQQQQIQLQQQQIQQKQLQQLQQQQQQQQQQQQQQQQQQQQQQQQQQQQQQQQQQQQQQQQQQQQLQQTRNLQPQQIQTQPLQQPPNQMAQSMISPQSTPSTSPSPQQQYQTTPVLQAGVQPQSQLTIKQPIQQPLQPLQQPQPQPQQQQQQQQQQPPQPQPQPQQFAQHLQQQQMQRPQAQLQPPQILQQLQQQQQQQQQQLQPPQILQQQYQTLQPQQLILQQQIHEKQNIHQQMLLQQQRNQTNLQLLQQQAQQIPPNNPQLLQTNQQQQQFVTQQIQHQHQQLLQSQSIIQQLQLQLHQQQQLQQLQAQLQQQTSPNIIQQQQQQQQQQQQQQRIN</sequence>
<dbReference type="EMBL" id="AAFI02000035">
    <property type="protein sequence ID" value="EAL67259.1"/>
    <property type="molecule type" value="Genomic_DNA"/>
</dbReference>
<dbReference type="RefSeq" id="XP_641222.1">
    <property type="nucleotide sequence ID" value="XM_636130.1"/>
</dbReference>
<dbReference type="GlyGen" id="Q54VY3">
    <property type="glycosylation" value="3 sites"/>
</dbReference>
<dbReference type="PaxDb" id="44689-DDB0206355"/>
<dbReference type="EnsemblProtists" id="EAL67259">
    <property type="protein sequence ID" value="EAL67259"/>
    <property type="gene ID" value="DDB_G0280065"/>
</dbReference>
<dbReference type="GeneID" id="8622353"/>
<dbReference type="KEGG" id="ddi:DDB_G0280065"/>
<dbReference type="dictyBase" id="DDB_G0280065"/>
<dbReference type="VEuPathDB" id="AmoebaDB:DDB_G0280065"/>
<dbReference type="eggNOG" id="ENOG502RHMF">
    <property type="taxonomic scope" value="Eukaryota"/>
</dbReference>
<dbReference type="HOGENOM" id="CLU_254259_0_0_1"/>
<dbReference type="InParanoid" id="Q54VY3"/>
<dbReference type="OMA" id="TSHAHEC"/>
<dbReference type="PRO" id="PR:Q54VY3"/>
<dbReference type="Proteomes" id="UP000002195">
    <property type="component" value="Chromosome 3"/>
</dbReference>
<dbReference type="InterPro" id="IPR046468">
    <property type="entry name" value="Spt20-like_SEP"/>
</dbReference>
<dbReference type="PANTHER" id="PTHR36911:SF3">
    <property type="entry name" value="GATA ZINC FINGER DOMAIN-CONTAINING PROTEIN 4-RELATED"/>
    <property type="match status" value="1"/>
</dbReference>
<dbReference type="PANTHER" id="PTHR36911">
    <property type="entry name" value="LIM ZINC-BINDING DOMAIN-CONTAINING PROTEIN-RELATED"/>
    <property type="match status" value="1"/>
</dbReference>
<dbReference type="Pfam" id="PF12090">
    <property type="entry name" value="Spt20_SEP"/>
    <property type="match status" value="2"/>
</dbReference>
<name>SPT20_DICDI</name>
<keyword id="KW-1185">Reference proteome</keyword>
<reference key="1">
    <citation type="journal article" date="2005" name="Nature">
        <title>The genome of the social amoeba Dictyostelium discoideum.</title>
        <authorList>
            <person name="Eichinger L."/>
            <person name="Pachebat J.A."/>
            <person name="Gloeckner G."/>
            <person name="Rajandream M.A."/>
            <person name="Sucgang R."/>
            <person name="Berriman M."/>
            <person name="Song J."/>
            <person name="Olsen R."/>
            <person name="Szafranski K."/>
            <person name="Xu Q."/>
            <person name="Tunggal B."/>
            <person name="Kummerfeld S."/>
            <person name="Madera M."/>
            <person name="Konfortov B.A."/>
            <person name="Rivero F."/>
            <person name="Bankier A.T."/>
            <person name="Lehmann R."/>
            <person name="Hamlin N."/>
            <person name="Davies R."/>
            <person name="Gaudet P."/>
            <person name="Fey P."/>
            <person name="Pilcher K."/>
            <person name="Chen G."/>
            <person name="Saunders D."/>
            <person name="Sodergren E.J."/>
            <person name="Davis P."/>
            <person name="Kerhornou A."/>
            <person name="Nie X."/>
            <person name="Hall N."/>
            <person name="Anjard C."/>
            <person name="Hemphill L."/>
            <person name="Bason N."/>
            <person name="Farbrother P."/>
            <person name="Desany B."/>
            <person name="Just E."/>
            <person name="Morio T."/>
            <person name="Rost R."/>
            <person name="Churcher C.M."/>
            <person name="Cooper J."/>
            <person name="Haydock S."/>
            <person name="van Driessche N."/>
            <person name="Cronin A."/>
            <person name="Goodhead I."/>
            <person name="Muzny D.M."/>
            <person name="Mourier T."/>
            <person name="Pain A."/>
            <person name="Lu M."/>
            <person name="Harper D."/>
            <person name="Lindsay R."/>
            <person name="Hauser H."/>
            <person name="James K.D."/>
            <person name="Quiles M."/>
            <person name="Madan Babu M."/>
            <person name="Saito T."/>
            <person name="Buchrieser C."/>
            <person name="Wardroper A."/>
            <person name="Felder M."/>
            <person name="Thangavelu M."/>
            <person name="Johnson D."/>
            <person name="Knights A."/>
            <person name="Loulseged H."/>
            <person name="Mungall K.L."/>
            <person name="Oliver K."/>
            <person name="Price C."/>
            <person name="Quail M.A."/>
            <person name="Urushihara H."/>
            <person name="Hernandez J."/>
            <person name="Rabbinowitsch E."/>
            <person name="Steffen D."/>
            <person name="Sanders M."/>
            <person name="Ma J."/>
            <person name="Kohara Y."/>
            <person name="Sharp S."/>
            <person name="Simmonds M.N."/>
            <person name="Spiegler S."/>
            <person name="Tivey A."/>
            <person name="Sugano S."/>
            <person name="White B."/>
            <person name="Walker D."/>
            <person name="Woodward J.R."/>
            <person name="Winckler T."/>
            <person name="Tanaka Y."/>
            <person name="Shaulsky G."/>
            <person name="Schleicher M."/>
            <person name="Weinstock G.M."/>
            <person name="Rosenthal A."/>
            <person name="Cox E.C."/>
            <person name="Chisholm R.L."/>
            <person name="Gibbs R.A."/>
            <person name="Loomis W.F."/>
            <person name="Platzer M."/>
            <person name="Kay R.R."/>
            <person name="Williams J.G."/>
            <person name="Dear P.H."/>
            <person name="Noegel A.A."/>
            <person name="Barrell B.G."/>
            <person name="Kuspa A."/>
        </authorList>
    </citation>
    <scope>NUCLEOTIDE SEQUENCE [LARGE SCALE GENOMIC DNA]</scope>
    <source>
        <strain>AX4</strain>
    </source>
</reference>
<comment type="similarity">
    <text evidence="2">Belongs to the SPT20 family.</text>
</comment>
<feature type="chain" id="PRO_0000352462" description="Transcription factor SPT20 homolog">
    <location>
        <begin position="1"/>
        <end position="1402"/>
    </location>
</feature>
<feature type="region of interest" description="Disordered" evidence="1">
    <location>
        <begin position="1"/>
        <end position="29"/>
    </location>
</feature>
<feature type="region of interest" description="Disordered" evidence="1">
    <location>
        <begin position="60"/>
        <end position="107"/>
    </location>
</feature>
<feature type="region of interest" description="Disordered" evidence="1">
    <location>
        <begin position="114"/>
        <end position="133"/>
    </location>
</feature>
<feature type="region of interest" description="Disordered" evidence="1">
    <location>
        <begin position="177"/>
        <end position="206"/>
    </location>
</feature>
<feature type="region of interest" description="Disordered" evidence="1">
    <location>
        <begin position="786"/>
        <end position="817"/>
    </location>
</feature>
<feature type="region of interest" description="Disordered" evidence="1">
    <location>
        <begin position="1136"/>
        <end position="1174"/>
    </location>
</feature>
<feature type="region of interest" description="Disordered" evidence="1">
    <location>
        <begin position="1199"/>
        <end position="1250"/>
    </location>
</feature>
<feature type="compositionally biased region" description="Basic and acidic residues" evidence="1">
    <location>
        <begin position="7"/>
        <end position="29"/>
    </location>
</feature>
<feature type="compositionally biased region" description="Polar residues" evidence="1">
    <location>
        <begin position="60"/>
        <end position="72"/>
    </location>
</feature>
<feature type="compositionally biased region" description="Low complexity" evidence="1">
    <location>
        <begin position="73"/>
        <end position="102"/>
    </location>
</feature>
<feature type="compositionally biased region" description="Low complexity" evidence="1">
    <location>
        <begin position="183"/>
        <end position="204"/>
    </location>
</feature>
<feature type="compositionally biased region" description="Low complexity" evidence="1">
    <location>
        <begin position="786"/>
        <end position="812"/>
    </location>
</feature>
<feature type="compositionally biased region" description="Low complexity" evidence="1">
    <location>
        <begin position="1136"/>
        <end position="1150"/>
    </location>
</feature>
<feature type="compositionally biased region" description="Low complexity" evidence="1">
    <location>
        <begin position="1157"/>
        <end position="1174"/>
    </location>
</feature>
<feature type="compositionally biased region" description="Low complexity" evidence="1">
    <location>
        <begin position="1199"/>
        <end position="1218"/>
    </location>
</feature>
<feature type="compositionally biased region" description="Low complexity" evidence="1">
    <location>
        <begin position="1226"/>
        <end position="1250"/>
    </location>
</feature>